<sequence>MENLEQTCASLRAQIAATEAQLAGLKRELEIAEQAAEVKAQSTTRTITAEDGKTNETREWPLLSEEYKRYGRQMIVPQLGLQGQLKLRAARVLIVGAGGLGCPAALYLAGAGVGTLGLVDGDTVENSNLHRQVLHSSKNVGTFKVDSAIEYLRELNPHPTYVPYRAHLTPQEAPGIFKDYDIVLDCTDNPATRYLISDTAVLLGKPLVSASALRTEGQLMVLNYPPRPVGDKSGGPCYRCVFPKPPPANSVVSCADGGILGPVVGTMGVLQALEAIKVITSPAVNPSASPPSLLIFSAYSTPLFRTIRLRARRANCAVCSADASVTLETLKNGSTDYVFFCGVAGLEATLSPEERISPLEFKKRHPKEVPQDGGRINKEPTIIDVREKVQFDICSLENSINIPISTILSSASSPTNVDANAQPSLPFWLPRELASADSTDPIYVVCRHGNDSQIAVRRLKELGLDRGGQRYVGDIQGGLRAWREQIDPDWPEY</sequence>
<reference key="1">
    <citation type="journal article" date="2008" name="PLoS Genet.">
        <title>Genomic islands in the pathogenic filamentous fungus Aspergillus fumigatus.</title>
        <authorList>
            <person name="Fedorova N.D."/>
            <person name="Khaldi N."/>
            <person name="Joardar V.S."/>
            <person name="Maiti R."/>
            <person name="Amedeo P."/>
            <person name="Anderson M.J."/>
            <person name="Crabtree J."/>
            <person name="Silva J.C."/>
            <person name="Badger J.H."/>
            <person name="Albarraq A."/>
            <person name="Angiuoli S."/>
            <person name="Bussey H."/>
            <person name="Bowyer P."/>
            <person name="Cotty P.J."/>
            <person name="Dyer P.S."/>
            <person name="Egan A."/>
            <person name="Galens K."/>
            <person name="Fraser-Liggett C.M."/>
            <person name="Haas B.J."/>
            <person name="Inman J.M."/>
            <person name="Kent R."/>
            <person name="Lemieux S."/>
            <person name="Malavazi I."/>
            <person name="Orvis J."/>
            <person name="Roemer T."/>
            <person name="Ronning C.M."/>
            <person name="Sundaram J.P."/>
            <person name="Sutton G."/>
            <person name="Turner G."/>
            <person name="Venter J.C."/>
            <person name="White O.R."/>
            <person name="Whitty B.R."/>
            <person name="Youngman P."/>
            <person name="Wolfe K.H."/>
            <person name="Goldman G.H."/>
            <person name="Wortman J.R."/>
            <person name="Jiang B."/>
            <person name="Denning D.W."/>
            <person name="Nierman W.C."/>
        </authorList>
    </citation>
    <scope>NUCLEOTIDE SEQUENCE [LARGE SCALE GENOMIC DNA]</scope>
    <source>
        <strain>CBS 144.89 / FGSC A1163 / CEA10</strain>
    </source>
</reference>
<name>UBA4_ASPFC</name>
<proteinExistence type="inferred from homology"/>
<gene>
    <name evidence="3" type="primary">uba4</name>
    <name evidence="3" type="synonym">cnxF</name>
    <name type="ORF">AFUB_058070</name>
</gene>
<dbReference type="EC" id="2.7.7.80" evidence="3"/>
<dbReference type="EC" id="2.8.1.11" evidence="3"/>
<dbReference type="EMBL" id="DS499597">
    <property type="protein sequence ID" value="EDP51788.1"/>
    <property type="molecule type" value="Genomic_DNA"/>
</dbReference>
<dbReference type="SMR" id="B0Y0P7"/>
<dbReference type="EnsemblFungi" id="EDP51788">
    <property type="protein sequence ID" value="EDP51788"/>
    <property type="gene ID" value="AFUB_058070"/>
</dbReference>
<dbReference type="VEuPathDB" id="FungiDB:AFUB_058070"/>
<dbReference type="HOGENOM" id="CLU_013325_1_2_1"/>
<dbReference type="OrthoDB" id="73674at5052"/>
<dbReference type="PhylomeDB" id="B0Y0P7"/>
<dbReference type="UniPathway" id="UPA00344"/>
<dbReference type="UniPathway" id="UPA00988"/>
<dbReference type="Proteomes" id="UP000001699">
    <property type="component" value="Unassembled WGS sequence"/>
</dbReference>
<dbReference type="GO" id="GO:0005829">
    <property type="term" value="C:cytosol"/>
    <property type="evidence" value="ECO:0007669"/>
    <property type="project" value="InterPro"/>
</dbReference>
<dbReference type="GO" id="GO:0070733">
    <property type="term" value="F:AMPylase activity"/>
    <property type="evidence" value="ECO:0007669"/>
    <property type="project" value="EnsemblFungi"/>
</dbReference>
<dbReference type="GO" id="GO:0005524">
    <property type="term" value="F:ATP binding"/>
    <property type="evidence" value="ECO:0007669"/>
    <property type="project" value="UniProtKB-KW"/>
</dbReference>
<dbReference type="GO" id="GO:0042802">
    <property type="term" value="F:identical protein binding"/>
    <property type="evidence" value="ECO:0007669"/>
    <property type="project" value="EnsemblFungi"/>
</dbReference>
<dbReference type="GO" id="GO:0046872">
    <property type="term" value="F:metal ion binding"/>
    <property type="evidence" value="ECO:0007669"/>
    <property type="project" value="UniProtKB-KW"/>
</dbReference>
<dbReference type="GO" id="GO:0061605">
    <property type="term" value="F:molybdopterin-synthase adenylyltransferase activity"/>
    <property type="evidence" value="ECO:0007669"/>
    <property type="project" value="UniProtKB-EC"/>
</dbReference>
<dbReference type="GO" id="GO:0061604">
    <property type="term" value="F:molybdopterin-synthase sulfurtransferase activity"/>
    <property type="evidence" value="ECO:0007669"/>
    <property type="project" value="UniProtKB-EC"/>
</dbReference>
<dbReference type="GO" id="GO:0004792">
    <property type="term" value="F:thiosulfate-cyanide sulfurtransferase activity"/>
    <property type="evidence" value="ECO:0007669"/>
    <property type="project" value="EnsemblFungi"/>
</dbReference>
<dbReference type="GO" id="GO:0042292">
    <property type="term" value="F:URM1 activating enzyme activity"/>
    <property type="evidence" value="ECO:0007669"/>
    <property type="project" value="EnsemblFungi"/>
</dbReference>
<dbReference type="GO" id="GO:0007114">
    <property type="term" value="P:cell budding"/>
    <property type="evidence" value="ECO:0007669"/>
    <property type="project" value="EnsemblFungi"/>
</dbReference>
<dbReference type="GO" id="GO:0034599">
    <property type="term" value="P:cellular response to oxidative stress"/>
    <property type="evidence" value="ECO:0007669"/>
    <property type="project" value="EnsemblFungi"/>
</dbReference>
<dbReference type="GO" id="GO:0001403">
    <property type="term" value="P:invasive growth in response to glucose limitation"/>
    <property type="evidence" value="ECO:0007669"/>
    <property type="project" value="EnsemblFungi"/>
</dbReference>
<dbReference type="GO" id="GO:0006777">
    <property type="term" value="P:Mo-molybdopterin cofactor biosynthetic process"/>
    <property type="evidence" value="ECO:0007669"/>
    <property type="project" value="UniProtKB-UniRule"/>
</dbReference>
<dbReference type="GO" id="GO:0032447">
    <property type="term" value="P:protein urmylation"/>
    <property type="evidence" value="ECO:0007669"/>
    <property type="project" value="EnsemblFungi"/>
</dbReference>
<dbReference type="GO" id="GO:2000220">
    <property type="term" value="P:regulation of pseudohyphal growth"/>
    <property type="evidence" value="ECO:0007669"/>
    <property type="project" value="EnsemblFungi"/>
</dbReference>
<dbReference type="GO" id="GO:0002143">
    <property type="term" value="P:tRNA wobble position uridine thiolation"/>
    <property type="evidence" value="ECO:0007669"/>
    <property type="project" value="EnsemblFungi"/>
</dbReference>
<dbReference type="CDD" id="cd00757">
    <property type="entry name" value="ThiF_MoeB_HesA_family"/>
    <property type="match status" value="1"/>
</dbReference>
<dbReference type="FunFam" id="3.40.50.720:FF:000033">
    <property type="entry name" value="Adenylyltransferase and sulfurtransferase MOCS3"/>
    <property type="match status" value="1"/>
</dbReference>
<dbReference type="FunFam" id="3.40.250.10:FF:000096">
    <property type="entry name" value="Adenylyltransferase and sulfurtransferase uba4"/>
    <property type="match status" value="1"/>
</dbReference>
<dbReference type="Gene3D" id="3.40.50.720">
    <property type="entry name" value="NAD(P)-binding Rossmann-like Domain"/>
    <property type="match status" value="1"/>
</dbReference>
<dbReference type="Gene3D" id="3.40.250.10">
    <property type="entry name" value="Rhodanese-like domain"/>
    <property type="match status" value="1"/>
</dbReference>
<dbReference type="HAMAP" id="MF_03049">
    <property type="entry name" value="MOCS3_Uba4"/>
    <property type="match status" value="1"/>
</dbReference>
<dbReference type="InterPro" id="IPR028885">
    <property type="entry name" value="MOCS3/Uba4"/>
</dbReference>
<dbReference type="InterPro" id="IPR001763">
    <property type="entry name" value="Rhodanese-like_dom"/>
</dbReference>
<dbReference type="InterPro" id="IPR036873">
    <property type="entry name" value="Rhodanese-like_dom_sf"/>
</dbReference>
<dbReference type="InterPro" id="IPR045886">
    <property type="entry name" value="ThiF/MoeB/HesA"/>
</dbReference>
<dbReference type="InterPro" id="IPR000594">
    <property type="entry name" value="ThiF_NAD_FAD-bd"/>
</dbReference>
<dbReference type="InterPro" id="IPR035985">
    <property type="entry name" value="Ubiquitin-activating_enz"/>
</dbReference>
<dbReference type="PANTHER" id="PTHR10953:SF102">
    <property type="entry name" value="ADENYLYLTRANSFERASE AND SULFURTRANSFERASE MOCS3"/>
    <property type="match status" value="1"/>
</dbReference>
<dbReference type="PANTHER" id="PTHR10953">
    <property type="entry name" value="UBIQUITIN-ACTIVATING ENZYME E1"/>
    <property type="match status" value="1"/>
</dbReference>
<dbReference type="Pfam" id="PF00581">
    <property type="entry name" value="Rhodanese"/>
    <property type="match status" value="1"/>
</dbReference>
<dbReference type="Pfam" id="PF00899">
    <property type="entry name" value="ThiF"/>
    <property type="match status" value="1"/>
</dbReference>
<dbReference type="SMART" id="SM00450">
    <property type="entry name" value="RHOD"/>
    <property type="match status" value="1"/>
</dbReference>
<dbReference type="SUPFAM" id="SSF69572">
    <property type="entry name" value="Activating enzymes of the ubiquitin-like proteins"/>
    <property type="match status" value="1"/>
</dbReference>
<dbReference type="PROSITE" id="PS50206">
    <property type="entry name" value="RHODANESE_3"/>
    <property type="match status" value="1"/>
</dbReference>
<feature type="chain" id="PRO_0000369218" description="Adenylyltransferase and sulfurtransferase uba4">
    <location>
        <begin position="1"/>
        <end position="493"/>
    </location>
</feature>
<feature type="domain" description="Rhodanese" evidence="3">
    <location>
        <begin position="376"/>
        <end position="491"/>
    </location>
</feature>
<feature type="active site" description="Glycyl thioester intermediate; for adenylyltransferase activity" evidence="3">
    <location>
        <position position="254"/>
    </location>
</feature>
<feature type="active site" description="Cysteine persulfide intermediate; for sulfurtransferase activity" evidence="3">
    <location>
        <position position="446"/>
    </location>
</feature>
<feature type="binding site" evidence="3">
    <location>
        <position position="99"/>
    </location>
    <ligand>
        <name>ATP</name>
        <dbReference type="ChEBI" id="CHEBI:30616"/>
    </ligand>
</feature>
<feature type="binding site" evidence="3">
    <location>
        <position position="120"/>
    </location>
    <ligand>
        <name>ATP</name>
        <dbReference type="ChEBI" id="CHEBI:30616"/>
    </ligand>
</feature>
<feature type="binding site" evidence="3">
    <location>
        <begin position="127"/>
        <end position="131"/>
    </location>
    <ligand>
        <name>ATP</name>
        <dbReference type="ChEBI" id="CHEBI:30616"/>
    </ligand>
</feature>
<feature type="binding site" evidence="3">
    <location>
        <position position="144"/>
    </location>
    <ligand>
        <name>ATP</name>
        <dbReference type="ChEBI" id="CHEBI:30616"/>
    </ligand>
</feature>
<feature type="binding site" evidence="3">
    <location>
        <begin position="188"/>
        <end position="189"/>
    </location>
    <ligand>
        <name>ATP</name>
        <dbReference type="ChEBI" id="CHEBI:30616"/>
    </ligand>
</feature>
<feature type="binding site" evidence="3">
    <location>
        <position position="237"/>
    </location>
    <ligand>
        <name>Zn(2+)</name>
        <dbReference type="ChEBI" id="CHEBI:29105"/>
    </ligand>
</feature>
<feature type="binding site" evidence="3">
    <location>
        <position position="240"/>
    </location>
    <ligand>
        <name>Zn(2+)</name>
        <dbReference type="ChEBI" id="CHEBI:29105"/>
    </ligand>
</feature>
<feature type="binding site" evidence="3">
    <location>
        <position position="316"/>
    </location>
    <ligand>
        <name>Zn(2+)</name>
        <dbReference type="ChEBI" id="CHEBI:29105"/>
    </ligand>
</feature>
<feature type="binding site" evidence="3">
    <location>
        <position position="319"/>
    </location>
    <ligand>
        <name>Zn(2+)</name>
        <dbReference type="ChEBI" id="CHEBI:29105"/>
    </ligand>
</feature>
<protein>
    <recommendedName>
        <fullName evidence="3">Adenylyltransferase and sulfurtransferase uba4</fullName>
    </recommendedName>
    <alternativeName>
        <fullName evidence="3">Common component for nitrate reductase and xanthine dehydrogenase protein F</fullName>
    </alternativeName>
    <alternativeName>
        <fullName evidence="3">Ubiquitin-like protein activator 4</fullName>
    </alternativeName>
    <domain>
        <recommendedName>
            <fullName evidence="3">Molybdopterin-synthase adenylyltransferase</fullName>
            <ecNumber evidence="3">2.7.7.80</ecNumber>
        </recommendedName>
        <alternativeName>
            <fullName evidence="3">Adenylyltransferase uba4</fullName>
        </alternativeName>
        <alternativeName>
            <fullName evidence="3">Sulfur carrier protein MOCS2A adenylyltransferase</fullName>
        </alternativeName>
    </domain>
    <domain>
        <recommendedName>
            <fullName evidence="3">Molybdopterin-synthase sulfurtransferase</fullName>
            <ecNumber evidence="3">2.8.1.11</ecNumber>
        </recommendedName>
        <alternativeName>
            <fullName evidence="3">Sulfur carrier protein MOCS2A sulfurtransferase</fullName>
        </alternativeName>
        <alternativeName>
            <fullName evidence="3">Sulfurtransferase uba4</fullName>
        </alternativeName>
    </domain>
</protein>
<comment type="function">
    <text evidence="1">Plays a central role in 2-thiolation of mcm(5)S(2)U at tRNA wobble positions of cytosolic tRNA(Lys), tRNA(Glu) and tRNA(Gln). Also essential during biosynthesis of the molybdenum cofactor. Acts by mediating the C-terminal thiocarboxylation of sulfur carriers urm1 and mocs2a. Its N-terminus first activates urm1 and mocs2a as acyl-adenylates (-COAMP), then the persulfide sulfur on the catalytic cysteine is transferred to urm1 and mocs2a to form thiocarboxylation (-COSH) of their C-terminus. The reaction probably involves hydrogen sulfide that is generated from the persulfide intermediate and that acts as a nucleophile towards urm1 and mocs2a. Subsequently, a transient disulfide bond is formed. Does not use thiosulfate as sulfur donor; nfs1 probably acting as a sulfur donor for thiocarboxylation reactions (By similarity).</text>
</comment>
<comment type="catalytic activity">
    <reaction evidence="3">
        <text>[molybdopterin-synthase sulfur-carrier protein]-C-terminal Gly-Gly + ATP + H(+) = [molybdopterin-synthase sulfur-carrier protein]-C-terminal Gly-Gly-AMP + diphosphate</text>
        <dbReference type="Rhea" id="RHEA:43616"/>
        <dbReference type="Rhea" id="RHEA-COMP:12159"/>
        <dbReference type="Rhea" id="RHEA-COMP:12202"/>
        <dbReference type="ChEBI" id="CHEBI:15378"/>
        <dbReference type="ChEBI" id="CHEBI:30616"/>
        <dbReference type="ChEBI" id="CHEBI:33019"/>
        <dbReference type="ChEBI" id="CHEBI:90618"/>
        <dbReference type="ChEBI" id="CHEBI:90778"/>
        <dbReference type="EC" id="2.7.7.80"/>
    </reaction>
</comment>
<comment type="catalytic activity">
    <reaction evidence="3">
        <text>[molybdopterin-synthase sulfur-carrier protein]-C-terminal Gly-Gly-AMP + S-sulfanyl-L-cysteinyl-[cysteine desulfurase] + AH2 = [molybdopterin-synthase sulfur-carrier protein]-C-terminal-Gly-aminoethanethioate + L-cysteinyl-[cysteine desulfurase] + A + AMP + 2 H(+)</text>
        <dbReference type="Rhea" id="RHEA:48612"/>
        <dbReference type="Rhea" id="RHEA-COMP:12157"/>
        <dbReference type="Rhea" id="RHEA-COMP:12158"/>
        <dbReference type="Rhea" id="RHEA-COMP:12159"/>
        <dbReference type="Rhea" id="RHEA-COMP:19907"/>
        <dbReference type="ChEBI" id="CHEBI:13193"/>
        <dbReference type="ChEBI" id="CHEBI:15378"/>
        <dbReference type="ChEBI" id="CHEBI:17499"/>
        <dbReference type="ChEBI" id="CHEBI:29950"/>
        <dbReference type="ChEBI" id="CHEBI:61963"/>
        <dbReference type="ChEBI" id="CHEBI:90618"/>
        <dbReference type="ChEBI" id="CHEBI:232372"/>
        <dbReference type="ChEBI" id="CHEBI:456215"/>
        <dbReference type="EC" id="2.8.1.11"/>
    </reaction>
</comment>
<comment type="cofactor">
    <cofactor evidence="3">
        <name>Zn(2+)</name>
        <dbReference type="ChEBI" id="CHEBI:29105"/>
    </cofactor>
    <text evidence="3">Binds 1 zinc ion per subunit.</text>
</comment>
<comment type="pathway">
    <text evidence="3">tRNA modification; 5-methoxycarbonylmethyl-2-thiouridine-tRNA biosynthesis.</text>
</comment>
<comment type="pathway">
    <text evidence="3">Cofactor biosynthesis; molybdopterin biosynthesis.</text>
</comment>
<comment type="subcellular location">
    <subcellularLocation>
        <location evidence="2">Cytoplasm</location>
        <location evidence="2">Cytosol</location>
    </subcellularLocation>
</comment>
<comment type="similarity">
    <text evidence="3">In the N-terminal section; belongs to the HesA/MoeB/ThiF family. UBA4 subfamily.</text>
</comment>
<organism>
    <name type="scientific">Aspergillus fumigatus (strain CBS 144.89 / FGSC A1163 / CEA10)</name>
    <name type="common">Neosartorya fumigata</name>
    <dbReference type="NCBI Taxonomy" id="451804"/>
    <lineage>
        <taxon>Eukaryota</taxon>
        <taxon>Fungi</taxon>
        <taxon>Dikarya</taxon>
        <taxon>Ascomycota</taxon>
        <taxon>Pezizomycotina</taxon>
        <taxon>Eurotiomycetes</taxon>
        <taxon>Eurotiomycetidae</taxon>
        <taxon>Eurotiales</taxon>
        <taxon>Aspergillaceae</taxon>
        <taxon>Aspergillus</taxon>
        <taxon>Aspergillus subgen. Fumigati</taxon>
    </lineage>
</organism>
<accession>B0Y0P7</accession>
<evidence type="ECO:0000250" key="1"/>
<evidence type="ECO:0000250" key="2">
    <source>
        <dbReference type="UniProtKB" id="P38820"/>
    </source>
</evidence>
<evidence type="ECO:0000255" key="3">
    <source>
        <dbReference type="HAMAP-Rule" id="MF_03049"/>
    </source>
</evidence>
<keyword id="KW-0067">ATP-binding</keyword>
<keyword id="KW-0963">Cytoplasm</keyword>
<keyword id="KW-0479">Metal-binding</keyword>
<keyword id="KW-0501">Molybdenum cofactor biosynthesis</keyword>
<keyword id="KW-0511">Multifunctional enzyme</keyword>
<keyword id="KW-0547">Nucleotide-binding</keyword>
<keyword id="KW-0548">Nucleotidyltransferase</keyword>
<keyword id="KW-0808">Transferase</keyword>
<keyword id="KW-0819">tRNA processing</keyword>
<keyword id="KW-0833">Ubl conjugation pathway</keyword>
<keyword id="KW-0862">Zinc</keyword>